<reference key="1">
    <citation type="journal article" date="2004" name="J. Mol. Biol.">
        <title>Crystal structure of echicetin from Echis carinatus (Indian saw-scaled viper) at 2.4 A resolution.</title>
        <authorList>
            <person name="Jasti J."/>
            <person name="Paramasivam M."/>
            <person name="Srinivasan A."/>
            <person name="Singh T.P."/>
        </authorList>
    </citation>
    <scope>NUCLEOTIDE SEQUENCE [MRNA]</scope>
    <scope>X-RAY CRYSTALLOGRAPHY (2.4 ANGSTROMS) OF 24-146</scope>
    <scope>DISULFIDE BONDS</scope>
    <source>
        <tissue>Venom</tissue>
        <tissue>Venom gland</tissue>
    </source>
</reference>
<sequence length="146" mass="17243">MGRFISVSFGLLVLLLSLSGTGANCLPDWSVYEGYCYKVFKERMNWADAEKFCTKQHKDGHLVSFRNSKEVDFVISLAFPMLKNDLVWIGLTDYWRDCNWEWSDGAQLDYKAWDNERHCFIYKNTDNQWTRRDCTWTFSFVCKCPA</sequence>
<protein>
    <recommendedName>
        <fullName>Snaclec echicetin subunit beta</fullName>
    </recommendedName>
</protein>
<accession>Q7T247</accession>
<dbReference type="EMBL" id="AY268948">
    <property type="protein sequence ID" value="AAP41219.2"/>
    <property type="molecule type" value="mRNA"/>
</dbReference>
<dbReference type="PDB" id="1OZ7">
    <property type="method" value="X-ray"/>
    <property type="resolution" value="2.40 A"/>
    <property type="chains" value="B=24-146"/>
</dbReference>
<dbReference type="PDBsum" id="1OZ7"/>
<dbReference type="SMR" id="Q7T247"/>
<dbReference type="EvolutionaryTrace" id="Q7T247"/>
<dbReference type="GO" id="GO:0005576">
    <property type="term" value="C:extracellular region"/>
    <property type="evidence" value="ECO:0007669"/>
    <property type="project" value="UniProtKB-SubCell"/>
</dbReference>
<dbReference type="GO" id="GO:0090729">
    <property type="term" value="F:toxin activity"/>
    <property type="evidence" value="ECO:0007669"/>
    <property type="project" value="UniProtKB-KW"/>
</dbReference>
<dbReference type="FunFam" id="3.10.100.10:FF:000087">
    <property type="entry name" value="Snaclec rhodocetin subunit delta"/>
    <property type="match status" value="1"/>
</dbReference>
<dbReference type="Gene3D" id="3.10.100.10">
    <property type="entry name" value="Mannose-Binding Protein A, subunit A"/>
    <property type="match status" value="1"/>
</dbReference>
<dbReference type="InterPro" id="IPR001304">
    <property type="entry name" value="C-type_lectin-like"/>
</dbReference>
<dbReference type="InterPro" id="IPR016186">
    <property type="entry name" value="C-type_lectin-like/link_sf"/>
</dbReference>
<dbReference type="InterPro" id="IPR050111">
    <property type="entry name" value="C-type_lectin/snaclec_domain"/>
</dbReference>
<dbReference type="InterPro" id="IPR016187">
    <property type="entry name" value="CTDL_fold"/>
</dbReference>
<dbReference type="PANTHER" id="PTHR22803">
    <property type="entry name" value="MANNOSE, PHOSPHOLIPASE, LECTIN RECEPTOR RELATED"/>
    <property type="match status" value="1"/>
</dbReference>
<dbReference type="Pfam" id="PF00059">
    <property type="entry name" value="Lectin_C"/>
    <property type="match status" value="1"/>
</dbReference>
<dbReference type="SMART" id="SM00034">
    <property type="entry name" value="CLECT"/>
    <property type="match status" value="1"/>
</dbReference>
<dbReference type="SUPFAM" id="SSF56436">
    <property type="entry name" value="C-type lectin-like"/>
    <property type="match status" value="1"/>
</dbReference>
<dbReference type="PROSITE" id="PS50041">
    <property type="entry name" value="C_TYPE_LECTIN_2"/>
    <property type="match status" value="1"/>
</dbReference>
<evidence type="ECO:0000250" key="1"/>
<evidence type="ECO:0000255" key="2"/>
<evidence type="ECO:0000255" key="3">
    <source>
        <dbReference type="PROSITE-ProRule" id="PRU00040"/>
    </source>
</evidence>
<evidence type="ECO:0000269" key="4">
    <source>
    </source>
</evidence>
<evidence type="ECO:0000305" key="5"/>
<evidence type="ECO:0007829" key="6">
    <source>
        <dbReference type="PDB" id="1OZ7"/>
    </source>
</evidence>
<keyword id="KW-0002">3D-structure</keyword>
<keyword id="KW-1015">Disulfide bond</keyword>
<keyword id="KW-1199">Hemostasis impairing toxin</keyword>
<keyword id="KW-1202">Platelet aggregation activating toxin</keyword>
<keyword id="KW-1201">Platelet aggregation inhibiting toxin</keyword>
<keyword id="KW-0964">Secreted</keyword>
<keyword id="KW-0732">Signal</keyword>
<keyword id="KW-0800">Toxin</keyword>
<feature type="signal peptide" evidence="2">
    <location>
        <begin position="1"/>
        <end position="23"/>
    </location>
</feature>
<feature type="chain" id="PRO_0000355266" description="Snaclec echicetin subunit beta">
    <location>
        <begin position="24"/>
        <end position="146"/>
    </location>
</feature>
<feature type="domain" description="C-type lectin" evidence="3">
    <location>
        <begin position="32"/>
        <end position="143"/>
    </location>
</feature>
<feature type="disulfide bond" evidence="3 4">
    <location>
        <begin position="25"/>
        <end position="36"/>
    </location>
</feature>
<feature type="disulfide bond" evidence="3 4">
    <location>
        <begin position="53"/>
        <end position="142"/>
    </location>
</feature>
<feature type="disulfide bond" description="Interchain (with C-78 in subunit alpha)" evidence="3 4">
    <location>
        <position position="98"/>
    </location>
</feature>
<feature type="disulfide bond" evidence="3 4">
    <location>
        <begin position="119"/>
        <end position="134"/>
    </location>
</feature>
<feature type="strand" evidence="6">
    <location>
        <begin position="30"/>
        <end position="32"/>
    </location>
</feature>
<feature type="strand" evidence="6">
    <location>
        <begin position="35"/>
        <end position="44"/>
    </location>
</feature>
<feature type="helix" evidence="6">
    <location>
        <begin position="46"/>
        <end position="56"/>
    </location>
</feature>
<feature type="helix" evidence="6">
    <location>
        <begin position="70"/>
        <end position="76"/>
    </location>
</feature>
<feature type="turn" evidence="6">
    <location>
        <begin position="80"/>
        <end position="83"/>
    </location>
</feature>
<feature type="strand" evidence="6">
    <location>
        <begin position="85"/>
        <end position="92"/>
    </location>
</feature>
<feature type="helix" evidence="6">
    <location>
        <begin position="97"/>
        <end position="99"/>
    </location>
</feature>
<feature type="strand" evidence="6">
    <location>
        <begin position="100"/>
        <end position="102"/>
    </location>
</feature>
<feature type="strand" evidence="6">
    <location>
        <begin position="119"/>
        <end position="123"/>
    </location>
</feature>
<feature type="turn" evidence="6">
    <location>
        <begin position="124"/>
        <end position="127"/>
    </location>
</feature>
<feature type="strand" evidence="6">
    <location>
        <begin position="128"/>
        <end position="132"/>
    </location>
</feature>
<feature type="strand" evidence="6">
    <location>
        <begin position="138"/>
        <end position="145"/>
    </location>
</feature>
<organism>
    <name type="scientific">Echis carinatus</name>
    <name type="common">Saw-scaled viper</name>
    <dbReference type="NCBI Taxonomy" id="40353"/>
    <lineage>
        <taxon>Eukaryota</taxon>
        <taxon>Metazoa</taxon>
        <taxon>Chordata</taxon>
        <taxon>Craniata</taxon>
        <taxon>Vertebrata</taxon>
        <taxon>Euteleostomi</taxon>
        <taxon>Lepidosauria</taxon>
        <taxon>Squamata</taxon>
        <taxon>Bifurcata</taxon>
        <taxon>Unidentata</taxon>
        <taxon>Episquamata</taxon>
        <taxon>Toxicofera</taxon>
        <taxon>Serpentes</taxon>
        <taxon>Colubroidea</taxon>
        <taxon>Viperidae</taxon>
        <taxon>Viperinae</taxon>
        <taxon>Echis</taxon>
    </lineage>
</organism>
<comment type="function">
    <text evidence="1">Binding of echicetin to glycoprotein Ibalpha (GP1BA) receptor on platelets alone results in inhibition of platelet aggregation, while binding to both GPIba receptor and IgMk promotes platelet aggregation and signal transduction.</text>
</comment>
<comment type="subunit">
    <text evidence="4">Heterodimer of subunits alpha and beta; disulfide-linked.</text>
</comment>
<comment type="subcellular location">
    <subcellularLocation>
        <location>Secreted</location>
    </subcellularLocation>
</comment>
<comment type="tissue specificity">
    <text>Expressed by the venom gland.</text>
</comment>
<comment type="similarity">
    <text evidence="5">Belongs to the snaclec family.</text>
</comment>
<comment type="caution">
    <text evidence="5">The name echicetin has been given to 2 different proteins, this one from E.carinatus and another one for which the subspecies has been specified (E.carinatus sochureki). Most experiments have been done on E.carinatus sochureki.</text>
</comment>
<proteinExistence type="evidence at protein level"/>
<name>SLB_ECHCA</name>